<accession>Q5BLB7</accession>
<proteinExistence type="evidence at transcript level"/>
<comment type="subcellular location">
    <subcellularLocation>
        <location evidence="4">Membrane</location>
        <topology evidence="4">Multi-pass membrane protein</topology>
    </subcellularLocation>
    <subcellularLocation>
        <location evidence="1">Nucleus</location>
    </subcellularLocation>
</comment>
<comment type="sequence caution" evidence="4">
    <conflict type="erroneous initiation">
        <sequence resource="EMBL-CDS" id="AAH90512"/>
    </conflict>
</comment>
<name>MALD1_DANRE</name>
<keyword id="KW-0472">Membrane</keyword>
<keyword id="KW-0539">Nucleus</keyword>
<keyword id="KW-1185">Reference proteome</keyword>
<keyword id="KW-0812">Transmembrane</keyword>
<keyword id="KW-1133">Transmembrane helix</keyword>
<organism>
    <name type="scientific">Danio rerio</name>
    <name type="common">Zebrafish</name>
    <name type="synonym">Brachydanio rerio</name>
    <dbReference type="NCBI Taxonomy" id="7955"/>
    <lineage>
        <taxon>Eukaryota</taxon>
        <taxon>Metazoa</taxon>
        <taxon>Chordata</taxon>
        <taxon>Craniata</taxon>
        <taxon>Vertebrata</taxon>
        <taxon>Euteleostomi</taxon>
        <taxon>Actinopterygii</taxon>
        <taxon>Neopterygii</taxon>
        <taxon>Teleostei</taxon>
        <taxon>Ostariophysi</taxon>
        <taxon>Cypriniformes</taxon>
        <taxon>Danionidae</taxon>
        <taxon>Danioninae</taxon>
        <taxon>Danio</taxon>
    </lineage>
</organism>
<feature type="chain" id="PRO_0000271524" description="MARVEL domain-containing protein 1">
    <location>
        <begin position="1"/>
        <end position="162"/>
    </location>
</feature>
<feature type="topological domain" description="Cytoplasmic" evidence="2">
    <location>
        <begin position="1"/>
        <end position="17"/>
    </location>
</feature>
<feature type="transmembrane region" description="Helical" evidence="2">
    <location>
        <begin position="18"/>
        <end position="38"/>
    </location>
</feature>
<feature type="topological domain" description="Extracellular" evidence="2">
    <location>
        <begin position="39"/>
        <end position="47"/>
    </location>
</feature>
<feature type="transmembrane region" description="Helical" evidence="2">
    <location>
        <begin position="48"/>
        <end position="68"/>
    </location>
</feature>
<feature type="topological domain" description="Cytoplasmic" evidence="2">
    <location>
        <begin position="69"/>
        <end position="86"/>
    </location>
</feature>
<feature type="transmembrane region" description="Helical" evidence="2">
    <location>
        <begin position="87"/>
        <end position="107"/>
    </location>
</feature>
<feature type="topological domain" description="Extracellular" evidence="2">
    <location>
        <begin position="108"/>
        <end position="127"/>
    </location>
</feature>
<feature type="transmembrane region" description="Helical" evidence="2">
    <location>
        <begin position="128"/>
        <end position="148"/>
    </location>
</feature>
<feature type="topological domain" description="Cytoplasmic" evidence="2">
    <location>
        <begin position="149"/>
        <end position="162"/>
    </location>
</feature>
<feature type="domain" description="MARVEL" evidence="3">
    <location>
        <begin position="14"/>
        <end position="155"/>
    </location>
</feature>
<dbReference type="EMBL" id="BC090512">
    <property type="protein sequence ID" value="AAH90512.1"/>
    <property type="status" value="ALT_INIT"/>
    <property type="molecule type" value="mRNA"/>
</dbReference>
<dbReference type="RefSeq" id="NP_001189346.1">
    <property type="nucleotide sequence ID" value="NM_001202417.1"/>
</dbReference>
<dbReference type="SMR" id="Q5BLB7"/>
<dbReference type="FunCoup" id="Q5BLB7">
    <property type="interactions" value="1407"/>
</dbReference>
<dbReference type="STRING" id="7955.ENSDARP00000011783"/>
<dbReference type="PaxDb" id="7955-ENSDARP00000011783"/>
<dbReference type="Ensembl" id="ENSDART00000019379">
    <property type="protein sequence ID" value="ENSDARP00000011783"/>
    <property type="gene ID" value="ENSDARG00000011724"/>
</dbReference>
<dbReference type="GeneID" id="497317"/>
<dbReference type="KEGG" id="dre:497317"/>
<dbReference type="AGR" id="ZFIN:ZDB-GENE-050208-33"/>
<dbReference type="CTD" id="83742"/>
<dbReference type="ZFIN" id="ZDB-GENE-050208-33">
    <property type="gene designation" value="marveld1"/>
</dbReference>
<dbReference type="eggNOG" id="KOG4788">
    <property type="taxonomic scope" value="Eukaryota"/>
</dbReference>
<dbReference type="HOGENOM" id="CLU_138621_0_0_1"/>
<dbReference type="InParanoid" id="Q5BLB7"/>
<dbReference type="OMA" id="AAHKYEG"/>
<dbReference type="OrthoDB" id="9938733at2759"/>
<dbReference type="PhylomeDB" id="Q5BLB7"/>
<dbReference type="TreeFam" id="TF316174"/>
<dbReference type="PRO" id="PR:Q5BLB7"/>
<dbReference type="Proteomes" id="UP000000437">
    <property type="component" value="Chromosome 13"/>
</dbReference>
<dbReference type="Bgee" id="ENSDARG00000011724">
    <property type="expression patterns" value="Expressed in swim bladder and 25 other cell types or tissues"/>
</dbReference>
<dbReference type="GO" id="GO:0016020">
    <property type="term" value="C:membrane"/>
    <property type="evidence" value="ECO:0000318"/>
    <property type="project" value="GO_Central"/>
</dbReference>
<dbReference type="GO" id="GO:0005634">
    <property type="term" value="C:nucleus"/>
    <property type="evidence" value="ECO:0007669"/>
    <property type="project" value="UniProtKB-SubCell"/>
</dbReference>
<dbReference type="GO" id="GO:0019911">
    <property type="term" value="F:structural constituent of myelin sheath"/>
    <property type="evidence" value="ECO:0000318"/>
    <property type="project" value="GO_Central"/>
</dbReference>
<dbReference type="GO" id="GO:0042552">
    <property type="term" value="P:myelination"/>
    <property type="evidence" value="ECO:0000318"/>
    <property type="project" value="GO_Central"/>
</dbReference>
<dbReference type="InterPro" id="IPR013295">
    <property type="entry name" value="MAL"/>
</dbReference>
<dbReference type="InterPro" id="IPR008253">
    <property type="entry name" value="Marvel"/>
</dbReference>
<dbReference type="InterPro" id="IPR050578">
    <property type="entry name" value="MARVEL-CKLF_proteins"/>
</dbReference>
<dbReference type="PANTHER" id="PTHR22776:SF28">
    <property type="entry name" value="MARVEL DOMAIN-CONTAINING PROTEIN 1"/>
    <property type="match status" value="1"/>
</dbReference>
<dbReference type="PANTHER" id="PTHR22776">
    <property type="entry name" value="MARVEL-CONTAINING POTENTIAL LIPID RAFT-ASSOCIATED PROTEIN"/>
    <property type="match status" value="1"/>
</dbReference>
<dbReference type="Pfam" id="PF01284">
    <property type="entry name" value="MARVEL"/>
    <property type="match status" value="1"/>
</dbReference>
<dbReference type="PRINTS" id="PR01884">
    <property type="entry name" value="MALPROTEIN"/>
</dbReference>
<dbReference type="PROSITE" id="PS51225">
    <property type="entry name" value="MARVEL"/>
    <property type="match status" value="1"/>
</dbReference>
<evidence type="ECO:0000250" key="1"/>
<evidence type="ECO:0000255" key="2"/>
<evidence type="ECO:0000255" key="3">
    <source>
        <dbReference type="PROSITE-ProRule" id="PRU00581"/>
    </source>
</evidence>
<evidence type="ECO:0000305" key="4"/>
<reference key="1">
    <citation type="submission" date="2005-02" db="EMBL/GenBank/DDBJ databases">
        <authorList>
            <consortium name="NIH - Zebrafish Gene Collection (ZGC) project"/>
        </authorList>
    </citation>
    <scope>NUCLEOTIDE SEQUENCE [LARGE SCALE MRNA]</scope>
    <source>
        <tissue>Embryo</tissue>
    </source>
</reference>
<gene>
    <name type="primary">marveld1</name>
    <name type="ORF">im:7136220</name>
</gene>
<sequence length="162" mass="18354">MPTQPQEKRSFLQFLKSFVGIVRVLQILLGAGLWVTIAANKYEGSIHFVLFVAVLFWLLTLAIFILTLLDKQDLVPIVGGERWLLSNLIHDVVATLLYLSTIGIMIYKTQKNSYCNLDVYKHHCLYKVYLTASVFACLTAAVYLLSGIYCSCRKCRGERTVV</sequence>
<protein>
    <recommendedName>
        <fullName>MARVEL domain-containing protein 1</fullName>
    </recommendedName>
</protein>